<name>Y1082_HAEIN</name>
<evidence type="ECO:0000305" key="1"/>
<sequence length="85" mass="9769">MELQKIEQILKDTLNIAEVYAQGENAHFGVIVVSDEIAALSRVKQQQTIYAPLMPYFSTGEIHALTIKTYTVEKWKRDRALNQFN</sequence>
<organism>
    <name type="scientific">Haemophilus influenzae (strain ATCC 51907 / DSM 11121 / KW20 / Rd)</name>
    <dbReference type="NCBI Taxonomy" id="71421"/>
    <lineage>
        <taxon>Bacteria</taxon>
        <taxon>Pseudomonadati</taxon>
        <taxon>Pseudomonadota</taxon>
        <taxon>Gammaproteobacteria</taxon>
        <taxon>Pasteurellales</taxon>
        <taxon>Pasteurellaceae</taxon>
        <taxon>Haemophilus</taxon>
    </lineage>
</organism>
<protein>
    <recommendedName>
        <fullName>Uncharacterized protein HI_1082</fullName>
    </recommendedName>
</protein>
<proteinExistence type="evidence at protein level"/>
<reference key="1">
    <citation type="journal article" date="1995" name="Science">
        <title>Whole-genome random sequencing and assembly of Haemophilus influenzae Rd.</title>
        <authorList>
            <person name="Fleischmann R.D."/>
            <person name="Adams M.D."/>
            <person name="White O."/>
            <person name="Clayton R.A."/>
            <person name="Kirkness E.F."/>
            <person name="Kerlavage A.R."/>
            <person name="Bult C.J."/>
            <person name="Tomb J.-F."/>
            <person name="Dougherty B.A."/>
            <person name="Merrick J.M."/>
            <person name="McKenney K."/>
            <person name="Sutton G.G."/>
            <person name="FitzHugh W."/>
            <person name="Fields C.A."/>
            <person name="Gocayne J.D."/>
            <person name="Scott J.D."/>
            <person name="Shirley R."/>
            <person name="Liu L.-I."/>
            <person name="Glodek A."/>
            <person name="Kelley J.M."/>
            <person name="Weidman J.F."/>
            <person name="Phillips C.A."/>
            <person name="Spriggs T."/>
            <person name="Hedblom E."/>
            <person name="Cotton M.D."/>
            <person name="Utterback T.R."/>
            <person name="Hanna M.C."/>
            <person name="Nguyen D.T."/>
            <person name="Saudek D.M."/>
            <person name="Brandon R.C."/>
            <person name="Fine L.D."/>
            <person name="Fritchman J.L."/>
            <person name="Fuhrmann J.L."/>
            <person name="Geoghagen N.S.M."/>
            <person name="Gnehm C.L."/>
            <person name="McDonald L.A."/>
            <person name="Small K.V."/>
            <person name="Fraser C.M."/>
            <person name="Smith H.O."/>
            <person name="Venter J.C."/>
        </authorList>
    </citation>
    <scope>NUCLEOTIDE SEQUENCE [LARGE SCALE GENOMIC DNA]</scope>
    <source>
        <strain>ATCC 51907 / DSM 11121 / KW20 / Rd</strain>
    </source>
</reference>
<reference key="2">
    <citation type="journal article" date="2000" name="Electrophoresis">
        <title>Two-dimensional map of the proteome of Haemophilus influenzae.</title>
        <authorList>
            <person name="Langen H."/>
            <person name="Takacs B."/>
            <person name="Evers S."/>
            <person name="Berndt P."/>
            <person name="Lahm H.W."/>
            <person name="Wipf B."/>
            <person name="Gray C."/>
            <person name="Fountoulakis M."/>
        </authorList>
    </citation>
    <scope>IDENTIFICATION BY MASS SPECTROMETRY</scope>
    <source>
        <strain>ATCC 51907 / DSM 11121 / KW20 / Rd</strain>
    </source>
</reference>
<keyword id="KW-1185">Reference proteome</keyword>
<comment type="similarity">
    <text evidence="1">Belongs to the BolA/IbaG family.</text>
</comment>
<feature type="chain" id="PRO_0000201221" description="Uncharacterized protein HI_1082">
    <location>
        <begin position="1"/>
        <end position="85"/>
    </location>
</feature>
<accession>P45026</accession>
<dbReference type="EMBL" id="L42023">
    <property type="protein sequence ID" value="AAC22738.1"/>
    <property type="molecule type" value="Genomic_DNA"/>
</dbReference>
<dbReference type="PIR" id="I64165">
    <property type="entry name" value="I64165"/>
</dbReference>
<dbReference type="RefSeq" id="NP_439239.1">
    <property type="nucleotide sequence ID" value="NC_000907.1"/>
</dbReference>
<dbReference type="SMR" id="P45026"/>
<dbReference type="STRING" id="71421.HI_1082"/>
<dbReference type="EnsemblBacteria" id="AAC22738">
    <property type="protein sequence ID" value="AAC22738"/>
    <property type="gene ID" value="HI_1082"/>
</dbReference>
<dbReference type="KEGG" id="hin:HI_1082"/>
<dbReference type="PATRIC" id="fig|71421.8.peg.1127"/>
<dbReference type="eggNOG" id="COG5007">
    <property type="taxonomic scope" value="Bacteria"/>
</dbReference>
<dbReference type="HOGENOM" id="CLU_109462_4_1_6"/>
<dbReference type="OrthoDB" id="9812890at2"/>
<dbReference type="PhylomeDB" id="P45026"/>
<dbReference type="BioCyc" id="HINF71421:G1GJ1-1117-MONOMER"/>
<dbReference type="Proteomes" id="UP000000579">
    <property type="component" value="Chromosome"/>
</dbReference>
<dbReference type="Gene3D" id="3.30.300.90">
    <property type="entry name" value="BolA-like"/>
    <property type="match status" value="1"/>
</dbReference>
<dbReference type="InterPro" id="IPR002634">
    <property type="entry name" value="BolA"/>
</dbReference>
<dbReference type="InterPro" id="IPR036065">
    <property type="entry name" value="BolA-like_sf"/>
</dbReference>
<dbReference type="InterPro" id="IPR050961">
    <property type="entry name" value="BolA/IbaG_stress_morph_reg"/>
</dbReference>
<dbReference type="PANTHER" id="PTHR46229:SF4">
    <property type="entry name" value="ACID STRESS PROTEIN IBAG"/>
    <property type="match status" value="1"/>
</dbReference>
<dbReference type="PANTHER" id="PTHR46229">
    <property type="entry name" value="BOLA TRANSCRIPTION REGULATOR"/>
    <property type="match status" value="1"/>
</dbReference>
<dbReference type="Pfam" id="PF01722">
    <property type="entry name" value="BolA"/>
    <property type="match status" value="1"/>
</dbReference>
<dbReference type="PIRSF" id="PIRSF003113">
    <property type="entry name" value="BolA"/>
    <property type="match status" value="1"/>
</dbReference>
<dbReference type="SUPFAM" id="SSF82657">
    <property type="entry name" value="BolA-like"/>
    <property type="match status" value="1"/>
</dbReference>
<gene>
    <name type="ordered locus">HI_1082</name>
</gene>